<organism>
    <name type="scientific">Prochlorococcus marinus (strain NATL1A)</name>
    <dbReference type="NCBI Taxonomy" id="167555"/>
    <lineage>
        <taxon>Bacteria</taxon>
        <taxon>Bacillati</taxon>
        <taxon>Cyanobacteriota</taxon>
        <taxon>Cyanophyceae</taxon>
        <taxon>Synechococcales</taxon>
        <taxon>Prochlorococcaceae</taxon>
        <taxon>Prochlorococcus</taxon>
    </lineage>
</organism>
<accession>A2BZD9</accession>
<keyword id="KW-0067">ATP-binding</keyword>
<keyword id="KW-0315">Glutamine amidotransferase</keyword>
<keyword id="KW-0332">GMP biosynthesis</keyword>
<keyword id="KW-0436">Ligase</keyword>
<keyword id="KW-0547">Nucleotide-binding</keyword>
<keyword id="KW-0658">Purine biosynthesis</keyword>
<name>GUAA_PROM1</name>
<proteinExistence type="inferred from homology"/>
<dbReference type="EC" id="6.3.5.2" evidence="1"/>
<dbReference type="EMBL" id="CP000553">
    <property type="protein sequence ID" value="ABM74599.1"/>
    <property type="molecule type" value="Genomic_DNA"/>
</dbReference>
<dbReference type="RefSeq" id="WP_011822837.1">
    <property type="nucleotide sequence ID" value="NC_008819.1"/>
</dbReference>
<dbReference type="SMR" id="A2BZD9"/>
<dbReference type="MEROPS" id="C26.957"/>
<dbReference type="KEGG" id="pme:NATL1_00351"/>
<dbReference type="eggNOG" id="COG0519">
    <property type="taxonomic scope" value="Bacteria"/>
</dbReference>
<dbReference type="HOGENOM" id="CLU_014340_0_5_3"/>
<dbReference type="UniPathway" id="UPA00189">
    <property type="reaction ID" value="UER00296"/>
</dbReference>
<dbReference type="Proteomes" id="UP000002592">
    <property type="component" value="Chromosome"/>
</dbReference>
<dbReference type="GO" id="GO:0005829">
    <property type="term" value="C:cytosol"/>
    <property type="evidence" value="ECO:0007669"/>
    <property type="project" value="TreeGrafter"/>
</dbReference>
<dbReference type="GO" id="GO:0005524">
    <property type="term" value="F:ATP binding"/>
    <property type="evidence" value="ECO:0007669"/>
    <property type="project" value="UniProtKB-UniRule"/>
</dbReference>
<dbReference type="GO" id="GO:0003921">
    <property type="term" value="F:GMP synthase activity"/>
    <property type="evidence" value="ECO:0007669"/>
    <property type="project" value="InterPro"/>
</dbReference>
<dbReference type="CDD" id="cd01742">
    <property type="entry name" value="GATase1_GMP_Synthase"/>
    <property type="match status" value="1"/>
</dbReference>
<dbReference type="CDD" id="cd01997">
    <property type="entry name" value="GMP_synthase_C"/>
    <property type="match status" value="1"/>
</dbReference>
<dbReference type="FunFam" id="3.30.300.10:FF:000002">
    <property type="entry name" value="GMP synthase [glutamine-hydrolyzing]"/>
    <property type="match status" value="1"/>
</dbReference>
<dbReference type="FunFam" id="3.40.50.620:FF:000001">
    <property type="entry name" value="GMP synthase [glutamine-hydrolyzing]"/>
    <property type="match status" value="1"/>
</dbReference>
<dbReference type="FunFam" id="3.40.50.880:FF:000001">
    <property type="entry name" value="GMP synthase [glutamine-hydrolyzing]"/>
    <property type="match status" value="1"/>
</dbReference>
<dbReference type="Gene3D" id="3.30.300.10">
    <property type="match status" value="1"/>
</dbReference>
<dbReference type="Gene3D" id="3.40.50.880">
    <property type="match status" value="1"/>
</dbReference>
<dbReference type="Gene3D" id="3.40.50.620">
    <property type="entry name" value="HUPs"/>
    <property type="match status" value="1"/>
</dbReference>
<dbReference type="HAMAP" id="MF_00344">
    <property type="entry name" value="GMP_synthase"/>
    <property type="match status" value="1"/>
</dbReference>
<dbReference type="InterPro" id="IPR029062">
    <property type="entry name" value="Class_I_gatase-like"/>
</dbReference>
<dbReference type="InterPro" id="IPR017926">
    <property type="entry name" value="GATASE"/>
</dbReference>
<dbReference type="InterPro" id="IPR001674">
    <property type="entry name" value="GMP_synth_C"/>
</dbReference>
<dbReference type="InterPro" id="IPR004739">
    <property type="entry name" value="GMP_synth_GATase"/>
</dbReference>
<dbReference type="InterPro" id="IPR022955">
    <property type="entry name" value="GMP_synthase"/>
</dbReference>
<dbReference type="InterPro" id="IPR025777">
    <property type="entry name" value="GMPS_ATP_PPase_dom"/>
</dbReference>
<dbReference type="InterPro" id="IPR022310">
    <property type="entry name" value="NAD/GMP_synthase"/>
</dbReference>
<dbReference type="InterPro" id="IPR014729">
    <property type="entry name" value="Rossmann-like_a/b/a_fold"/>
</dbReference>
<dbReference type="NCBIfam" id="TIGR00884">
    <property type="entry name" value="guaA_Cterm"/>
    <property type="match status" value="1"/>
</dbReference>
<dbReference type="NCBIfam" id="TIGR00888">
    <property type="entry name" value="guaA_Nterm"/>
    <property type="match status" value="1"/>
</dbReference>
<dbReference type="NCBIfam" id="NF000848">
    <property type="entry name" value="PRK00074.1"/>
    <property type="match status" value="1"/>
</dbReference>
<dbReference type="PANTHER" id="PTHR11922:SF2">
    <property type="entry name" value="GMP SYNTHASE [GLUTAMINE-HYDROLYZING]"/>
    <property type="match status" value="1"/>
</dbReference>
<dbReference type="PANTHER" id="PTHR11922">
    <property type="entry name" value="GMP SYNTHASE-RELATED"/>
    <property type="match status" value="1"/>
</dbReference>
<dbReference type="Pfam" id="PF00117">
    <property type="entry name" value="GATase"/>
    <property type="match status" value="1"/>
</dbReference>
<dbReference type="Pfam" id="PF00958">
    <property type="entry name" value="GMP_synt_C"/>
    <property type="match status" value="1"/>
</dbReference>
<dbReference type="Pfam" id="PF02540">
    <property type="entry name" value="NAD_synthase"/>
    <property type="match status" value="1"/>
</dbReference>
<dbReference type="PRINTS" id="PR00097">
    <property type="entry name" value="ANTSNTHASEII"/>
</dbReference>
<dbReference type="PRINTS" id="PR00099">
    <property type="entry name" value="CPSGATASE"/>
</dbReference>
<dbReference type="PRINTS" id="PR00096">
    <property type="entry name" value="GATASE"/>
</dbReference>
<dbReference type="SUPFAM" id="SSF52402">
    <property type="entry name" value="Adenine nucleotide alpha hydrolases-like"/>
    <property type="match status" value="1"/>
</dbReference>
<dbReference type="SUPFAM" id="SSF52317">
    <property type="entry name" value="Class I glutamine amidotransferase-like"/>
    <property type="match status" value="1"/>
</dbReference>
<dbReference type="SUPFAM" id="SSF54810">
    <property type="entry name" value="GMP synthetase C-terminal dimerisation domain"/>
    <property type="match status" value="1"/>
</dbReference>
<dbReference type="PROSITE" id="PS51273">
    <property type="entry name" value="GATASE_TYPE_1"/>
    <property type="match status" value="1"/>
</dbReference>
<dbReference type="PROSITE" id="PS51553">
    <property type="entry name" value="GMPS_ATP_PPASE"/>
    <property type="match status" value="1"/>
</dbReference>
<evidence type="ECO:0000255" key="1">
    <source>
        <dbReference type="HAMAP-Rule" id="MF_00344"/>
    </source>
</evidence>
<feature type="chain" id="PRO_1000120358" description="GMP synthase [glutamine-hydrolyzing]">
    <location>
        <begin position="1"/>
        <end position="528"/>
    </location>
</feature>
<feature type="domain" description="Glutamine amidotransferase type-1" evidence="1">
    <location>
        <begin position="13"/>
        <end position="204"/>
    </location>
</feature>
<feature type="domain" description="GMPS ATP-PPase" evidence="1">
    <location>
        <begin position="205"/>
        <end position="403"/>
    </location>
</feature>
<feature type="active site" description="Nucleophile" evidence="1">
    <location>
        <position position="90"/>
    </location>
</feature>
<feature type="active site" evidence="1">
    <location>
        <position position="178"/>
    </location>
</feature>
<feature type="active site" evidence="1">
    <location>
        <position position="180"/>
    </location>
</feature>
<feature type="binding site" evidence="1">
    <location>
        <begin position="232"/>
        <end position="238"/>
    </location>
    <ligand>
        <name>ATP</name>
        <dbReference type="ChEBI" id="CHEBI:30616"/>
    </ligand>
</feature>
<reference key="1">
    <citation type="journal article" date="2007" name="PLoS Genet.">
        <title>Patterns and implications of gene gain and loss in the evolution of Prochlorococcus.</title>
        <authorList>
            <person name="Kettler G.C."/>
            <person name="Martiny A.C."/>
            <person name="Huang K."/>
            <person name="Zucker J."/>
            <person name="Coleman M.L."/>
            <person name="Rodrigue S."/>
            <person name="Chen F."/>
            <person name="Lapidus A."/>
            <person name="Ferriera S."/>
            <person name="Johnson J."/>
            <person name="Steglich C."/>
            <person name="Church G.M."/>
            <person name="Richardson P."/>
            <person name="Chisholm S.W."/>
        </authorList>
    </citation>
    <scope>NUCLEOTIDE SEQUENCE [LARGE SCALE GENOMIC DNA]</scope>
    <source>
        <strain>NATL1A</strain>
    </source>
</reference>
<protein>
    <recommendedName>
        <fullName evidence="1">GMP synthase [glutamine-hydrolyzing]</fullName>
        <ecNumber evidence="1">6.3.5.2</ecNumber>
    </recommendedName>
    <alternativeName>
        <fullName evidence="1">GMP synthetase</fullName>
    </alternativeName>
    <alternativeName>
        <fullName evidence="1">Glutamine amidotransferase</fullName>
    </alternativeName>
</protein>
<comment type="function">
    <text evidence="1">Catalyzes the synthesis of GMP from XMP.</text>
</comment>
<comment type="catalytic activity">
    <reaction evidence="1">
        <text>XMP + L-glutamine + ATP + H2O = GMP + L-glutamate + AMP + diphosphate + 2 H(+)</text>
        <dbReference type="Rhea" id="RHEA:11680"/>
        <dbReference type="ChEBI" id="CHEBI:15377"/>
        <dbReference type="ChEBI" id="CHEBI:15378"/>
        <dbReference type="ChEBI" id="CHEBI:29985"/>
        <dbReference type="ChEBI" id="CHEBI:30616"/>
        <dbReference type="ChEBI" id="CHEBI:33019"/>
        <dbReference type="ChEBI" id="CHEBI:57464"/>
        <dbReference type="ChEBI" id="CHEBI:58115"/>
        <dbReference type="ChEBI" id="CHEBI:58359"/>
        <dbReference type="ChEBI" id="CHEBI:456215"/>
        <dbReference type="EC" id="6.3.5.2"/>
    </reaction>
</comment>
<comment type="pathway">
    <text evidence="1">Purine metabolism; GMP biosynthesis; GMP from XMP (L-Gln route): step 1/1.</text>
</comment>
<comment type="subunit">
    <text evidence="1">Homodimer.</text>
</comment>
<gene>
    <name evidence="1" type="primary">guaA</name>
    <name type="ordered locus">NATL1_00351</name>
</gene>
<sequence>MASMISAEKRNPAIVILDFGSQYSELIARRIRETEVYSLVMSYTTSADKLRSLKPKGIILSGGPGSVYEEGAPYCDPEIFNLGIPVLGVCYGMQLMVHELGGSVKPATGKAEYGKAPLEVDDPTALLTNVISGSTMWMSHGDSVQKLPKGFVRLAHTSNTLEAAIALHDKSFYGVQFHPEVVHSTHGMVVIRNFVYDICSCEPDWTTNLFIDEAVSQVQQQVGDKKVLLALSGGVDSSTLAFLLNKAIGPQLTCMFIDQGFMRKGEPEFLMSFFDEKFKINVEYINARERFISQLKGVTDPEQKRKIIGREFIRVFEEESLRLGPFDYLAQGTLYPDVIESSGTNIDPKTGERIAVKIKSHHNVGGLPKDLQFKLVEPLRRLFKDEVRKVGKSLGLPDEIVRRHPFPGPGLAIRILGEVTHEKLNCLRDADLIVREEINNAGLYNKIWQAFAVLLPVYSVGVMGDQRTYAWPIVVRCVSSEDGMTADWSRLPYAVLEKISNRIVNEVEGVNRVVLDITSKPPGTIEWE</sequence>